<accession>P0AB47</accession>
<accession>P75998</accession>
<evidence type="ECO:0000255" key="1"/>
<evidence type="ECO:0000305" key="2"/>
<protein>
    <recommendedName>
        <fullName>Uncharacterized protein YmgD</fullName>
    </recommendedName>
</protein>
<organism>
    <name type="scientific">Escherichia coli O6:H1 (strain CFT073 / ATCC 700928 / UPEC)</name>
    <dbReference type="NCBI Taxonomy" id="199310"/>
    <lineage>
        <taxon>Bacteria</taxon>
        <taxon>Pseudomonadati</taxon>
        <taxon>Pseudomonadota</taxon>
        <taxon>Gammaproteobacteria</taxon>
        <taxon>Enterobacterales</taxon>
        <taxon>Enterobacteriaceae</taxon>
        <taxon>Escherichia</taxon>
    </lineage>
</organism>
<name>YMGD_ECOL6</name>
<feature type="signal peptide" evidence="1">
    <location>
        <begin position="1"/>
        <end position="19"/>
    </location>
</feature>
<feature type="chain" id="PRO_0000042573" description="Uncharacterized protein YmgD">
    <location>
        <begin position="20"/>
        <end position="109"/>
    </location>
</feature>
<sequence>MKKFALLAGLFVFAPMTWAQDYNIKNGLPSETYITCAEANEMAKTDSAQVAEIVAVMGNASVASRDLKIEQSPELSAKVVEKLNQVCAKDPQMLLITAIDDTMRAIGKK</sequence>
<comment type="sequence caution" evidence="2">
    <conflict type="erroneous initiation">
        <sequence resource="EMBL-CDS" id="AAN80081"/>
    </conflict>
</comment>
<reference key="1">
    <citation type="journal article" date="2002" name="Proc. Natl. Acad. Sci. U.S.A.">
        <title>Extensive mosaic structure revealed by the complete genome sequence of uropathogenic Escherichia coli.</title>
        <authorList>
            <person name="Welch R.A."/>
            <person name="Burland V."/>
            <person name="Plunkett G. III"/>
            <person name="Redford P."/>
            <person name="Roesch P."/>
            <person name="Rasko D."/>
            <person name="Buckles E.L."/>
            <person name="Liou S.-R."/>
            <person name="Boutin A."/>
            <person name="Hackett J."/>
            <person name="Stroud D."/>
            <person name="Mayhew G.F."/>
            <person name="Rose D.J."/>
            <person name="Zhou S."/>
            <person name="Schwartz D.C."/>
            <person name="Perna N.T."/>
            <person name="Mobley H.L.T."/>
            <person name="Donnenberg M.S."/>
            <person name="Blattner F.R."/>
        </authorList>
    </citation>
    <scope>NUCLEOTIDE SEQUENCE [LARGE SCALE GENOMIC DNA]</scope>
    <source>
        <strain>CFT073 / ATCC 700928 / UPEC</strain>
    </source>
</reference>
<proteinExistence type="inferred from homology"/>
<gene>
    <name type="primary">ymgD</name>
    <name type="ordered locus">c1616</name>
</gene>
<keyword id="KW-1185">Reference proteome</keyword>
<keyword id="KW-0732">Signal</keyword>
<dbReference type="EMBL" id="AE014075">
    <property type="protein sequence ID" value="AAN80081.1"/>
    <property type="status" value="ALT_INIT"/>
    <property type="molecule type" value="Genomic_DNA"/>
</dbReference>
<dbReference type="BMRB" id="P0AB47"/>
<dbReference type="SMR" id="P0AB47"/>
<dbReference type="STRING" id="199310.c1616"/>
<dbReference type="KEGG" id="ecc:c1616"/>
<dbReference type="eggNOG" id="ENOG5032WSV">
    <property type="taxonomic scope" value="Bacteria"/>
</dbReference>
<dbReference type="HOGENOM" id="CLU_2194528_0_0_6"/>
<dbReference type="Proteomes" id="UP000001410">
    <property type="component" value="Chromosome"/>
</dbReference>
<dbReference type="Gene3D" id="1.10.890.30">
    <property type="entry name" value="YmgD protein"/>
    <property type="match status" value="1"/>
</dbReference>
<dbReference type="InterPro" id="IPR032497">
    <property type="entry name" value="YmgD"/>
</dbReference>
<dbReference type="InterPro" id="IPR038304">
    <property type="entry name" value="YmgD_sf"/>
</dbReference>
<dbReference type="Pfam" id="PF16456">
    <property type="entry name" value="YmgD"/>
    <property type="match status" value="1"/>
</dbReference>